<protein>
    <recommendedName>
        <fullName evidence="1">Probable nicotinate-nucleotide adenylyltransferase</fullName>
        <ecNumber evidence="1">2.7.7.18</ecNumber>
    </recommendedName>
    <alternativeName>
        <fullName evidence="1">Deamido-NAD(+) diphosphorylase</fullName>
    </alternativeName>
    <alternativeName>
        <fullName evidence="1">Deamido-NAD(+) pyrophosphorylase</fullName>
    </alternativeName>
    <alternativeName>
        <fullName evidence="1">Nicotinate mononucleotide adenylyltransferase</fullName>
        <shortName evidence="1">NaMN adenylyltransferase</shortName>
    </alternativeName>
</protein>
<organism>
    <name type="scientific">Cellvibrio japonicus (strain Ueda107)</name>
    <name type="common">Pseudomonas fluorescens subsp. cellulosa</name>
    <dbReference type="NCBI Taxonomy" id="498211"/>
    <lineage>
        <taxon>Bacteria</taxon>
        <taxon>Pseudomonadati</taxon>
        <taxon>Pseudomonadota</taxon>
        <taxon>Gammaproteobacteria</taxon>
        <taxon>Cellvibrionales</taxon>
        <taxon>Cellvibrionaceae</taxon>
        <taxon>Cellvibrio</taxon>
    </lineage>
</organism>
<proteinExistence type="inferred from homology"/>
<gene>
    <name evidence="1" type="primary">nadD</name>
    <name type="ordered locus">CJA_0786</name>
</gene>
<sequence length="211" mass="23294">MRPTLGLFGGTFDPIHIGHLRLALELKQQLQLDGMRLMPCHLPAHRDQPGASSTQRATMLQLALAACPELSIDLREVARARASYTVDSLSELRAELGAETSLVFCLGTDSFAGLDRWHRWQELLQLAHLVVVERPGWDIPSTGPVRTLLAQHQGAPGQLRLAACGSIVRLAPRLLPISATEIRQLIGAGQSPQFLVPDSVWQYIGQERLYR</sequence>
<accession>B3PKM9</accession>
<reference key="1">
    <citation type="journal article" date="2008" name="J. Bacteriol.">
        <title>Insights into plant cell wall degradation from the genome sequence of the soil bacterium Cellvibrio japonicus.</title>
        <authorList>
            <person name="DeBoy R.T."/>
            <person name="Mongodin E.F."/>
            <person name="Fouts D.E."/>
            <person name="Tailford L.E."/>
            <person name="Khouri H."/>
            <person name="Emerson J.B."/>
            <person name="Mohamoud Y."/>
            <person name="Watkins K."/>
            <person name="Henrissat B."/>
            <person name="Gilbert H.J."/>
            <person name="Nelson K.E."/>
        </authorList>
    </citation>
    <scope>NUCLEOTIDE SEQUENCE [LARGE SCALE GENOMIC DNA]</scope>
    <source>
        <strain>Ueda107</strain>
    </source>
</reference>
<name>NADD_CELJU</name>
<keyword id="KW-0067">ATP-binding</keyword>
<keyword id="KW-0520">NAD</keyword>
<keyword id="KW-0547">Nucleotide-binding</keyword>
<keyword id="KW-0548">Nucleotidyltransferase</keyword>
<keyword id="KW-0662">Pyridine nucleotide biosynthesis</keyword>
<keyword id="KW-1185">Reference proteome</keyword>
<keyword id="KW-0808">Transferase</keyword>
<comment type="function">
    <text evidence="1">Catalyzes the reversible adenylation of nicotinate mononucleotide (NaMN) to nicotinic acid adenine dinucleotide (NaAD).</text>
</comment>
<comment type="catalytic activity">
    <reaction evidence="1">
        <text>nicotinate beta-D-ribonucleotide + ATP + H(+) = deamido-NAD(+) + diphosphate</text>
        <dbReference type="Rhea" id="RHEA:22860"/>
        <dbReference type="ChEBI" id="CHEBI:15378"/>
        <dbReference type="ChEBI" id="CHEBI:30616"/>
        <dbReference type="ChEBI" id="CHEBI:33019"/>
        <dbReference type="ChEBI" id="CHEBI:57502"/>
        <dbReference type="ChEBI" id="CHEBI:58437"/>
        <dbReference type="EC" id="2.7.7.18"/>
    </reaction>
</comment>
<comment type="pathway">
    <text evidence="1">Cofactor biosynthesis; NAD(+) biosynthesis; deamido-NAD(+) from nicotinate D-ribonucleotide: step 1/1.</text>
</comment>
<comment type="similarity">
    <text evidence="1">Belongs to the NadD family.</text>
</comment>
<feature type="chain" id="PRO_1000100765" description="Probable nicotinate-nucleotide adenylyltransferase">
    <location>
        <begin position="1"/>
        <end position="211"/>
    </location>
</feature>
<evidence type="ECO:0000255" key="1">
    <source>
        <dbReference type="HAMAP-Rule" id="MF_00244"/>
    </source>
</evidence>
<dbReference type="EC" id="2.7.7.18" evidence="1"/>
<dbReference type="EMBL" id="CP000934">
    <property type="protein sequence ID" value="ACE86195.1"/>
    <property type="molecule type" value="Genomic_DNA"/>
</dbReference>
<dbReference type="RefSeq" id="WP_012486447.1">
    <property type="nucleotide sequence ID" value="NC_010995.1"/>
</dbReference>
<dbReference type="SMR" id="B3PKM9"/>
<dbReference type="STRING" id="498211.CJA_0786"/>
<dbReference type="KEGG" id="cja:CJA_0786"/>
<dbReference type="eggNOG" id="COG1057">
    <property type="taxonomic scope" value="Bacteria"/>
</dbReference>
<dbReference type="HOGENOM" id="CLU_069765_0_0_6"/>
<dbReference type="OrthoDB" id="5295945at2"/>
<dbReference type="UniPathway" id="UPA00253">
    <property type="reaction ID" value="UER00332"/>
</dbReference>
<dbReference type="Proteomes" id="UP000001036">
    <property type="component" value="Chromosome"/>
</dbReference>
<dbReference type="GO" id="GO:0005524">
    <property type="term" value="F:ATP binding"/>
    <property type="evidence" value="ECO:0007669"/>
    <property type="project" value="UniProtKB-KW"/>
</dbReference>
<dbReference type="GO" id="GO:0004515">
    <property type="term" value="F:nicotinate-nucleotide adenylyltransferase activity"/>
    <property type="evidence" value="ECO:0007669"/>
    <property type="project" value="UniProtKB-UniRule"/>
</dbReference>
<dbReference type="GO" id="GO:0009435">
    <property type="term" value="P:NAD biosynthetic process"/>
    <property type="evidence" value="ECO:0007669"/>
    <property type="project" value="UniProtKB-UniRule"/>
</dbReference>
<dbReference type="CDD" id="cd02165">
    <property type="entry name" value="NMNAT"/>
    <property type="match status" value="1"/>
</dbReference>
<dbReference type="Gene3D" id="3.40.50.620">
    <property type="entry name" value="HUPs"/>
    <property type="match status" value="1"/>
</dbReference>
<dbReference type="HAMAP" id="MF_00244">
    <property type="entry name" value="NaMN_adenylyltr"/>
    <property type="match status" value="1"/>
</dbReference>
<dbReference type="InterPro" id="IPR004821">
    <property type="entry name" value="Cyt_trans-like"/>
</dbReference>
<dbReference type="InterPro" id="IPR005248">
    <property type="entry name" value="NadD/NMNAT"/>
</dbReference>
<dbReference type="InterPro" id="IPR014729">
    <property type="entry name" value="Rossmann-like_a/b/a_fold"/>
</dbReference>
<dbReference type="NCBIfam" id="TIGR00125">
    <property type="entry name" value="cyt_tran_rel"/>
    <property type="match status" value="1"/>
</dbReference>
<dbReference type="NCBIfam" id="TIGR00482">
    <property type="entry name" value="nicotinate (nicotinamide) nucleotide adenylyltransferase"/>
    <property type="match status" value="1"/>
</dbReference>
<dbReference type="NCBIfam" id="NF000839">
    <property type="entry name" value="PRK00071.1-1"/>
    <property type="match status" value="1"/>
</dbReference>
<dbReference type="PANTHER" id="PTHR39321">
    <property type="entry name" value="NICOTINATE-NUCLEOTIDE ADENYLYLTRANSFERASE-RELATED"/>
    <property type="match status" value="1"/>
</dbReference>
<dbReference type="PANTHER" id="PTHR39321:SF3">
    <property type="entry name" value="PHOSPHOPANTETHEINE ADENYLYLTRANSFERASE"/>
    <property type="match status" value="1"/>
</dbReference>
<dbReference type="Pfam" id="PF01467">
    <property type="entry name" value="CTP_transf_like"/>
    <property type="match status" value="1"/>
</dbReference>
<dbReference type="SUPFAM" id="SSF52374">
    <property type="entry name" value="Nucleotidylyl transferase"/>
    <property type="match status" value="1"/>
</dbReference>